<evidence type="ECO:0000255" key="1">
    <source>
        <dbReference type="HAMAP-Rule" id="MF_01692"/>
    </source>
</evidence>
<proteinExistence type="inferred from homology"/>
<gene>
    <name type="ordered locus">SPCG_2061</name>
</gene>
<reference key="1">
    <citation type="journal article" date="2009" name="BMC Genomics">
        <title>Genome evolution driven by host adaptations results in a more virulent and antimicrobial-resistant Streptococcus pneumoniae serotype 14.</title>
        <authorList>
            <person name="Ding F."/>
            <person name="Tang P."/>
            <person name="Hsu M.-H."/>
            <person name="Cui P."/>
            <person name="Hu S."/>
            <person name="Yu J."/>
            <person name="Chiu C.-H."/>
        </authorList>
    </citation>
    <scope>NUCLEOTIDE SEQUENCE [LARGE SCALE GENOMIC DNA]</scope>
    <source>
        <strain>CGSP14</strain>
    </source>
</reference>
<name>DAPEL_STRPS</name>
<accession>B2IN14</accession>
<comment type="function">
    <text evidence="1">Catalyzes the conversion of N-acetyl-diaminopimelate to diaminopimelate and acetate.</text>
</comment>
<comment type="catalytic activity">
    <reaction evidence="1">
        <text>N-acetyl-(2S,6S)-2,6-diaminopimelate + H2O = (2S,6S)-2,6-diaminopimelate + acetate</text>
        <dbReference type="Rhea" id="RHEA:20405"/>
        <dbReference type="ChEBI" id="CHEBI:15377"/>
        <dbReference type="ChEBI" id="CHEBI:30089"/>
        <dbReference type="ChEBI" id="CHEBI:57609"/>
        <dbReference type="ChEBI" id="CHEBI:58767"/>
        <dbReference type="EC" id="3.5.1.47"/>
    </reaction>
</comment>
<comment type="pathway">
    <text evidence="1">Amino-acid biosynthesis; L-lysine biosynthesis via DAP pathway; LL-2,6-diaminopimelate from (S)-tetrahydrodipicolinate (acetylase route): step 3/3.</text>
</comment>
<comment type="similarity">
    <text evidence="1">Belongs to the peptidase M20A family. N-acetyldiaminopimelate deacetylase subfamily.</text>
</comment>
<feature type="chain" id="PRO_0000376785" description="N-acetyldiaminopimelate deacetylase">
    <location>
        <begin position="1"/>
        <end position="376"/>
    </location>
</feature>
<feature type="active site" evidence="1">
    <location>
        <position position="69"/>
    </location>
</feature>
<feature type="active site" description="Proton acceptor" evidence="1">
    <location>
        <position position="128"/>
    </location>
</feature>
<protein>
    <recommendedName>
        <fullName evidence="1">N-acetyldiaminopimelate deacetylase</fullName>
        <ecNumber evidence="1">3.5.1.47</ecNumber>
    </recommendedName>
</protein>
<keyword id="KW-0028">Amino-acid biosynthesis</keyword>
<keyword id="KW-0220">Diaminopimelate biosynthesis</keyword>
<keyword id="KW-0378">Hydrolase</keyword>
<keyword id="KW-0457">Lysine biosynthesis</keyword>
<sequence>MLDLIQTRRALHQIPEIGLEEFKTQAYLLDVIEKLTTGKDFVQIRTWRTGILVYLQGSQPERTIGWRTDIDGLPIVEQTGLPFASQHQGRMHACGHDFHMTIALGCLERALEEQPKNNLLFLFQPAEENEAGGMLMYEDGAFGDWLPNQFYGLHVRPDLKVGQIATNTHTLFAGTCEVKIRFKGKGGHAAFPHEANDALVAASYFVTQVQSVVSRNVNPIEGAVVTFGVFQAGTTNNVITDTAFLHGTIRALTQDMSLLVQKRVKTVAEGVAAAFDMEVEVELKQGGYLPVENNPALARELMDFFDEKDGIELIDIEPAMTGEDFGYLLSKVDGVMFWLGIDSPYALHHPQMSPKEEVLAIGVAAVSSFLKKKAAE</sequence>
<dbReference type="EC" id="3.5.1.47" evidence="1"/>
<dbReference type="EMBL" id="CP001033">
    <property type="protein sequence ID" value="ACB91313.1"/>
    <property type="molecule type" value="Genomic_DNA"/>
</dbReference>
<dbReference type="RefSeq" id="WP_000885068.1">
    <property type="nucleotide sequence ID" value="NC_010582.1"/>
</dbReference>
<dbReference type="SMR" id="B2IN14"/>
<dbReference type="KEGG" id="spw:SPCG_2061"/>
<dbReference type="HOGENOM" id="CLU_023257_0_1_9"/>
<dbReference type="UniPathway" id="UPA00034">
    <property type="reaction ID" value="UER00024"/>
</dbReference>
<dbReference type="GO" id="GO:0050118">
    <property type="term" value="F:N-acetyldiaminopimelate deacetylase activity"/>
    <property type="evidence" value="ECO:0007669"/>
    <property type="project" value="UniProtKB-UniRule"/>
</dbReference>
<dbReference type="GO" id="GO:0019877">
    <property type="term" value="P:diaminopimelate biosynthetic process"/>
    <property type="evidence" value="ECO:0007669"/>
    <property type="project" value="UniProtKB-UniRule"/>
</dbReference>
<dbReference type="GO" id="GO:0009089">
    <property type="term" value="P:lysine biosynthetic process via diaminopimelate"/>
    <property type="evidence" value="ECO:0007669"/>
    <property type="project" value="UniProtKB-UniRule"/>
</dbReference>
<dbReference type="CDD" id="cd05670">
    <property type="entry name" value="M20_Acy1_YkuR-like"/>
    <property type="match status" value="1"/>
</dbReference>
<dbReference type="FunFam" id="3.30.70.360:FF:000001">
    <property type="entry name" value="N-acetyldiaminopimelate deacetylase"/>
    <property type="match status" value="1"/>
</dbReference>
<dbReference type="Gene3D" id="3.30.70.360">
    <property type="match status" value="1"/>
</dbReference>
<dbReference type="Gene3D" id="3.40.630.10">
    <property type="entry name" value="Zn peptidases"/>
    <property type="match status" value="1"/>
</dbReference>
<dbReference type="HAMAP" id="MF_01692">
    <property type="entry name" value="DapEL"/>
    <property type="match status" value="1"/>
</dbReference>
<dbReference type="InterPro" id="IPR023905">
    <property type="entry name" value="AcetylDAP_deacetylase"/>
</dbReference>
<dbReference type="InterPro" id="IPR017439">
    <property type="entry name" value="Amidohydrolase"/>
</dbReference>
<dbReference type="InterPro" id="IPR036264">
    <property type="entry name" value="Bact_exopeptidase_dim_dom"/>
</dbReference>
<dbReference type="InterPro" id="IPR002933">
    <property type="entry name" value="Peptidase_M20"/>
</dbReference>
<dbReference type="InterPro" id="IPR011650">
    <property type="entry name" value="Peptidase_M20_dimer"/>
</dbReference>
<dbReference type="NCBIfam" id="TIGR01891">
    <property type="entry name" value="amidohydrolases"/>
    <property type="match status" value="1"/>
</dbReference>
<dbReference type="PANTHER" id="PTHR11014:SF98">
    <property type="entry name" value="N-ACETYLDIAMINOPIMELATE DEACETYLASE"/>
    <property type="match status" value="1"/>
</dbReference>
<dbReference type="PANTHER" id="PTHR11014">
    <property type="entry name" value="PEPTIDASE M20 FAMILY MEMBER"/>
    <property type="match status" value="1"/>
</dbReference>
<dbReference type="Pfam" id="PF07687">
    <property type="entry name" value="M20_dimer"/>
    <property type="match status" value="1"/>
</dbReference>
<dbReference type="Pfam" id="PF01546">
    <property type="entry name" value="Peptidase_M20"/>
    <property type="match status" value="1"/>
</dbReference>
<dbReference type="PIRSF" id="PIRSF005962">
    <property type="entry name" value="Pept_M20D_amidohydro"/>
    <property type="match status" value="1"/>
</dbReference>
<dbReference type="SUPFAM" id="SSF55031">
    <property type="entry name" value="Bacterial exopeptidase dimerisation domain"/>
    <property type="match status" value="1"/>
</dbReference>
<dbReference type="SUPFAM" id="SSF53187">
    <property type="entry name" value="Zn-dependent exopeptidases"/>
    <property type="match status" value="1"/>
</dbReference>
<organism>
    <name type="scientific">Streptococcus pneumoniae (strain CGSP14)</name>
    <dbReference type="NCBI Taxonomy" id="516950"/>
    <lineage>
        <taxon>Bacteria</taxon>
        <taxon>Bacillati</taxon>
        <taxon>Bacillota</taxon>
        <taxon>Bacilli</taxon>
        <taxon>Lactobacillales</taxon>
        <taxon>Streptococcaceae</taxon>
        <taxon>Streptococcus</taxon>
    </lineage>
</organism>